<accession>Q48QY6</accession>
<name>RS2_STRPM</name>
<evidence type="ECO:0000255" key="1">
    <source>
        <dbReference type="HAMAP-Rule" id="MF_00291"/>
    </source>
</evidence>
<evidence type="ECO:0000305" key="2"/>
<reference key="1">
    <citation type="journal article" date="2005" name="J. Infect. Dis.">
        <title>Genome sequence of a serotype M28 strain of group A Streptococcus: potential new insights into puerperal sepsis and bacterial disease specificity.</title>
        <authorList>
            <person name="Green N.M."/>
            <person name="Zhang S."/>
            <person name="Porcella S.F."/>
            <person name="Nagiec M.J."/>
            <person name="Barbian K.D."/>
            <person name="Beres S.B."/>
            <person name="Lefebvre R.B."/>
            <person name="Musser J.M."/>
        </authorList>
    </citation>
    <scope>NUCLEOTIDE SEQUENCE [LARGE SCALE GENOMIC DNA]</scope>
    <source>
        <strain>MGAS6180</strain>
    </source>
</reference>
<comment type="similarity">
    <text evidence="1">Belongs to the universal ribosomal protein uS2 family.</text>
</comment>
<protein>
    <recommendedName>
        <fullName evidence="1">Small ribosomal subunit protein uS2</fullName>
    </recommendedName>
    <alternativeName>
        <fullName evidence="2">30S ribosomal protein S2</fullName>
    </alternativeName>
</protein>
<keyword id="KW-0687">Ribonucleoprotein</keyword>
<keyword id="KW-0689">Ribosomal protein</keyword>
<feature type="chain" id="PRO_1000004092" description="Small ribosomal subunit protein uS2">
    <location>
        <begin position="1"/>
        <end position="255"/>
    </location>
</feature>
<organism>
    <name type="scientific">Streptococcus pyogenes serotype M28 (strain MGAS6180)</name>
    <dbReference type="NCBI Taxonomy" id="319701"/>
    <lineage>
        <taxon>Bacteria</taxon>
        <taxon>Bacillati</taxon>
        <taxon>Bacillota</taxon>
        <taxon>Bacilli</taxon>
        <taxon>Lactobacillales</taxon>
        <taxon>Streptococcaceae</taxon>
        <taxon>Streptococcus</taxon>
    </lineage>
</organism>
<proteinExistence type="inferred from homology"/>
<dbReference type="EMBL" id="CP000056">
    <property type="protein sequence ID" value="AAX72874.1"/>
    <property type="molecule type" value="Genomic_DNA"/>
</dbReference>
<dbReference type="RefSeq" id="WP_011285255.1">
    <property type="nucleotide sequence ID" value="NC_007296.2"/>
</dbReference>
<dbReference type="SMR" id="Q48QY6"/>
<dbReference type="KEGG" id="spb:M28_Spy1764"/>
<dbReference type="HOGENOM" id="CLU_040318_1_2_9"/>
<dbReference type="GO" id="GO:0022627">
    <property type="term" value="C:cytosolic small ribosomal subunit"/>
    <property type="evidence" value="ECO:0007669"/>
    <property type="project" value="TreeGrafter"/>
</dbReference>
<dbReference type="GO" id="GO:0003735">
    <property type="term" value="F:structural constituent of ribosome"/>
    <property type="evidence" value="ECO:0007669"/>
    <property type="project" value="InterPro"/>
</dbReference>
<dbReference type="GO" id="GO:0006412">
    <property type="term" value="P:translation"/>
    <property type="evidence" value="ECO:0007669"/>
    <property type="project" value="UniProtKB-UniRule"/>
</dbReference>
<dbReference type="CDD" id="cd01425">
    <property type="entry name" value="RPS2"/>
    <property type="match status" value="1"/>
</dbReference>
<dbReference type="FunFam" id="1.10.287.610:FF:000001">
    <property type="entry name" value="30S ribosomal protein S2"/>
    <property type="match status" value="1"/>
</dbReference>
<dbReference type="Gene3D" id="3.40.50.10490">
    <property type="entry name" value="Glucose-6-phosphate isomerase like protein, domain 1"/>
    <property type="match status" value="1"/>
</dbReference>
<dbReference type="Gene3D" id="1.10.287.610">
    <property type="entry name" value="Helix hairpin bin"/>
    <property type="match status" value="1"/>
</dbReference>
<dbReference type="HAMAP" id="MF_00291_B">
    <property type="entry name" value="Ribosomal_uS2_B"/>
    <property type="match status" value="1"/>
</dbReference>
<dbReference type="InterPro" id="IPR001865">
    <property type="entry name" value="Ribosomal_uS2"/>
</dbReference>
<dbReference type="InterPro" id="IPR005706">
    <property type="entry name" value="Ribosomal_uS2_bac/mit/plastid"/>
</dbReference>
<dbReference type="InterPro" id="IPR018130">
    <property type="entry name" value="Ribosomal_uS2_CS"/>
</dbReference>
<dbReference type="InterPro" id="IPR023591">
    <property type="entry name" value="Ribosomal_uS2_flav_dom_sf"/>
</dbReference>
<dbReference type="NCBIfam" id="TIGR01011">
    <property type="entry name" value="rpsB_bact"/>
    <property type="match status" value="1"/>
</dbReference>
<dbReference type="PANTHER" id="PTHR12534">
    <property type="entry name" value="30S RIBOSOMAL PROTEIN S2 PROKARYOTIC AND ORGANELLAR"/>
    <property type="match status" value="1"/>
</dbReference>
<dbReference type="PANTHER" id="PTHR12534:SF0">
    <property type="entry name" value="SMALL RIBOSOMAL SUBUNIT PROTEIN US2M"/>
    <property type="match status" value="1"/>
</dbReference>
<dbReference type="Pfam" id="PF00318">
    <property type="entry name" value="Ribosomal_S2"/>
    <property type="match status" value="1"/>
</dbReference>
<dbReference type="PRINTS" id="PR00395">
    <property type="entry name" value="RIBOSOMALS2"/>
</dbReference>
<dbReference type="SUPFAM" id="SSF52313">
    <property type="entry name" value="Ribosomal protein S2"/>
    <property type="match status" value="1"/>
</dbReference>
<dbReference type="PROSITE" id="PS00962">
    <property type="entry name" value="RIBOSOMAL_S2_1"/>
    <property type="match status" value="1"/>
</dbReference>
<sequence>MAVISMKQLLEAGVHFGHQTRRWNPKMAKYIFTERNGIHVIDLQQTVKLADQAYEFVRDAAANDAVILFVGTKKQAAEAVADEATRAGQYFINHRWLGGTLTNWGTIQKRIARLKEIKRMEEEGTFDVLPKKEVALLNKQRARLEKFLGGIEDMPRIPDVMYVVDPHKEQIAVKEAKKLGIPVVAMVDTNADPDDIDIIIPANDDAIRAVKLITAKLADAIIEGRQGEDADVAFEADIQADSIEEIVEVVEGDNA</sequence>
<gene>
    <name evidence="1" type="primary">rpsB</name>
    <name type="ordered locus">M28_Spy1764</name>
</gene>